<accession>B8ES44</accession>
<sequence length="366" mass="38653">MRVEGKPYTTIWTGEDGASIKIIDQTRLPHRFEIIAISDVEAAARAIAEMWVRGAPLIGVTAAYGLALAMRADPSDANLERASAHLKATRPTAVNLQWAVDRVRRLIESAPPPQRFAAAFAEAGVIARDDIALCEAIGMHGLSLIKTIAAGKPPGAPVNVLTHCNAGWLATVDWGTATAPVYKAHDAGLAVHVYVDETRPRNQGAALTAFELGQHGVPHTVIVDNAGGHLMQHGGIDMVIVGTDRTTASGDVCNKIGTYLKALAARDNNIPFYVAAPSPSIDFSIADGVREVPIEIRSEAEVTHISGLSADGEITRVRLTPEGSRALNPAFDVTPARLVTGLITERGVIKANASALAAAFRERVAG</sequence>
<comment type="function">
    <text evidence="1">Catalyzes the interconversion of methylthioribose-1-phosphate (MTR-1-P) into methylthioribulose-1-phosphate (MTRu-1-P).</text>
</comment>
<comment type="catalytic activity">
    <reaction evidence="1">
        <text>5-(methylsulfanyl)-alpha-D-ribose 1-phosphate = 5-(methylsulfanyl)-D-ribulose 1-phosphate</text>
        <dbReference type="Rhea" id="RHEA:19989"/>
        <dbReference type="ChEBI" id="CHEBI:58533"/>
        <dbReference type="ChEBI" id="CHEBI:58548"/>
        <dbReference type="EC" id="5.3.1.23"/>
    </reaction>
</comment>
<comment type="pathway">
    <text evidence="1">Amino-acid biosynthesis; L-methionine biosynthesis via salvage pathway; L-methionine from S-methyl-5-thio-alpha-D-ribose 1-phosphate: step 1/6.</text>
</comment>
<comment type="similarity">
    <text evidence="2">Belongs to the eIF-2B alpha/beta/delta subunits family. MtnA subfamily.</text>
</comment>
<dbReference type="EC" id="5.3.1.23" evidence="1"/>
<dbReference type="EMBL" id="CP001280">
    <property type="protein sequence ID" value="ACK52259.1"/>
    <property type="molecule type" value="Genomic_DNA"/>
</dbReference>
<dbReference type="RefSeq" id="WP_012592328.1">
    <property type="nucleotide sequence ID" value="NC_011666.1"/>
</dbReference>
<dbReference type="SMR" id="B8ES44"/>
<dbReference type="STRING" id="395965.Msil_3353"/>
<dbReference type="KEGG" id="msl:Msil_3353"/>
<dbReference type="eggNOG" id="COG0182">
    <property type="taxonomic scope" value="Bacteria"/>
</dbReference>
<dbReference type="HOGENOM" id="CLU_016218_1_2_5"/>
<dbReference type="OrthoDB" id="9803436at2"/>
<dbReference type="UniPathway" id="UPA00904">
    <property type="reaction ID" value="UER00874"/>
</dbReference>
<dbReference type="Proteomes" id="UP000002257">
    <property type="component" value="Chromosome"/>
</dbReference>
<dbReference type="GO" id="GO:0046523">
    <property type="term" value="F:S-methyl-5-thioribose-1-phosphate isomerase activity"/>
    <property type="evidence" value="ECO:0007669"/>
    <property type="project" value="UniProtKB-UniRule"/>
</dbReference>
<dbReference type="GO" id="GO:0019509">
    <property type="term" value="P:L-methionine salvage from methylthioadenosine"/>
    <property type="evidence" value="ECO:0007669"/>
    <property type="project" value="UniProtKB-UniRule"/>
</dbReference>
<dbReference type="FunFam" id="3.40.50.10470:FF:000006">
    <property type="entry name" value="Methylthioribose-1-phosphate isomerase"/>
    <property type="match status" value="1"/>
</dbReference>
<dbReference type="Gene3D" id="1.20.120.420">
    <property type="entry name" value="translation initiation factor eif-2b, domain 1"/>
    <property type="match status" value="1"/>
</dbReference>
<dbReference type="Gene3D" id="3.40.50.10470">
    <property type="entry name" value="Translation initiation factor eif-2b, domain 2"/>
    <property type="match status" value="1"/>
</dbReference>
<dbReference type="HAMAP" id="MF_01678">
    <property type="entry name" value="Salvage_MtnA"/>
    <property type="match status" value="1"/>
</dbReference>
<dbReference type="InterPro" id="IPR000649">
    <property type="entry name" value="IF-2B-related"/>
</dbReference>
<dbReference type="InterPro" id="IPR005251">
    <property type="entry name" value="IF-M1Pi"/>
</dbReference>
<dbReference type="InterPro" id="IPR042529">
    <property type="entry name" value="IF_2B-like_C"/>
</dbReference>
<dbReference type="InterPro" id="IPR011559">
    <property type="entry name" value="Initiation_fac_2B_a/b/d"/>
</dbReference>
<dbReference type="InterPro" id="IPR027363">
    <property type="entry name" value="M1Pi_N"/>
</dbReference>
<dbReference type="InterPro" id="IPR037171">
    <property type="entry name" value="NagB/RpiA_transferase-like"/>
</dbReference>
<dbReference type="NCBIfam" id="TIGR00524">
    <property type="entry name" value="eIF-2B_rel"/>
    <property type="match status" value="1"/>
</dbReference>
<dbReference type="NCBIfam" id="NF004326">
    <property type="entry name" value="PRK05720.1"/>
    <property type="match status" value="1"/>
</dbReference>
<dbReference type="NCBIfam" id="TIGR00512">
    <property type="entry name" value="salvage_mtnA"/>
    <property type="match status" value="1"/>
</dbReference>
<dbReference type="PANTHER" id="PTHR43475">
    <property type="entry name" value="METHYLTHIORIBOSE-1-PHOSPHATE ISOMERASE"/>
    <property type="match status" value="1"/>
</dbReference>
<dbReference type="PANTHER" id="PTHR43475:SF1">
    <property type="entry name" value="METHYLTHIORIBOSE-1-PHOSPHATE ISOMERASE"/>
    <property type="match status" value="1"/>
</dbReference>
<dbReference type="Pfam" id="PF01008">
    <property type="entry name" value="IF-2B"/>
    <property type="match status" value="1"/>
</dbReference>
<dbReference type="SUPFAM" id="SSF100950">
    <property type="entry name" value="NagB/RpiA/CoA transferase-like"/>
    <property type="match status" value="1"/>
</dbReference>
<organism>
    <name type="scientific">Methylocella silvestris (strain DSM 15510 / CIP 108128 / LMG 27833 / NCIMB 13906 / BL2)</name>
    <dbReference type="NCBI Taxonomy" id="395965"/>
    <lineage>
        <taxon>Bacteria</taxon>
        <taxon>Pseudomonadati</taxon>
        <taxon>Pseudomonadota</taxon>
        <taxon>Alphaproteobacteria</taxon>
        <taxon>Hyphomicrobiales</taxon>
        <taxon>Beijerinckiaceae</taxon>
        <taxon>Methylocella</taxon>
    </lineage>
</organism>
<proteinExistence type="inferred from homology"/>
<keyword id="KW-0028">Amino-acid biosynthesis</keyword>
<keyword id="KW-0413">Isomerase</keyword>
<keyword id="KW-0486">Methionine biosynthesis</keyword>
<keyword id="KW-1185">Reference proteome</keyword>
<evidence type="ECO:0000255" key="1">
    <source>
        <dbReference type="HAMAP-Rule" id="MF_01678"/>
    </source>
</evidence>
<evidence type="ECO:0000305" key="2"/>
<reference key="1">
    <citation type="journal article" date="2010" name="J. Bacteriol.">
        <title>Complete genome sequence of the aerobic facultative methanotroph Methylocella silvestris BL2.</title>
        <authorList>
            <person name="Chen Y."/>
            <person name="Crombie A."/>
            <person name="Rahman M.T."/>
            <person name="Dedysh S.N."/>
            <person name="Liesack W."/>
            <person name="Stott M.B."/>
            <person name="Alam M."/>
            <person name="Theisen A.R."/>
            <person name="Murrell J.C."/>
            <person name="Dunfield P.F."/>
        </authorList>
    </citation>
    <scope>NUCLEOTIDE SEQUENCE [LARGE SCALE GENOMIC DNA]</scope>
    <source>
        <strain>DSM 15510 / CIP 108128 / LMG 27833 / NCIMB 13906 / BL2</strain>
    </source>
</reference>
<feature type="chain" id="PRO_1000187364" description="Methylthioribose-1-phosphate isomerase">
    <location>
        <begin position="1"/>
        <end position="366"/>
    </location>
</feature>
<feature type="active site" description="Proton donor" evidence="1">
    <location>
        <position position="244"/>
    </location>
</feature>
<feature type="binding site" evidence="1">
    <location>
        <begin position="53"/>
        <end position="55"/>
    </location>
    <ligand>
        <name>substrate</name>
    </ligand>
</feature>
<feature type="binding site" evidence="1">
    <location>
        <position position="90"/>
    </location>
    <ligand>
        <name>substrate</name>
    </ligand>
</feature>
<feature type="binding site" evidence="1">
    <location>
        <position position="203"/>
    </location>
    <ligand>
        <name>substrate</name>
    </ligand>
</feature>
<feature type="binding site" evidence="1">
    <location>
        <begin position="254"/>
        <end position="255"/>
    </location>
    <ligand>
        <name>substrate</name>
    </ligand>
</feature>
<feature type="site" description="Transition state stabilizer" evidence="1">
    <location>
        <position position="164"/>
    </location>
</feature>
<protein>
    <recommendedName>
        <fullName evidence="1">Methylthioribose-1-phosphate isomerase</fullName>
        <shortName evidence="1">M1Pi</shortName>
        <shortName evidence="1">MTR-1-P isomerase</shortName>
        <ecNumber evidence="1">5.3.1.23</ecNumber>
    </recommendedName>
    <alternativeName>
        <fullName evidence="1">S-methyl-5-thioribose-1-phosphate isomerase</fullName>
    </alternativeName>
</protein>
<name>MTNA_METSB</name>
<gene>
    <name evidence="1" type="primary">mtnA</name>
    <name type="ordered locus">Msil_3353</name>
</gene>